<comment type="function">
    <text evidence="1">Prevents the establishment of the cellular antiviral state initiated by host RIGI, which normally triggers the antiviral transduction signal that leads to the activation of type I IFN genes by transcription factors IRF3 and IRF7. Also participates in the up-regulation of the splicing of viral mRNAs.</text>
</comment>
<comment type="subcellular location">
    <subcellularLocation>
        <location evidence="1">Host cytoplasm</location>
    </subcellularLocation>
    <subcellularLocation>
        <location evidence="1">Host nucleus</location>
    </subcellularLocation>
</comment>
<comment type="alternative products">
    <event type="alternative splicing"/>
    <isoform>
        <id>Q9ENX6-1</id>
        <name>NS1</name>
        <sequence type="displayed"/>
    </isoform>
    <isoform>
        <id>Q9ENX7-1</id>
        <name>NEP</name>
        <name>NS2</name>
        <sequence type="external"/>
    </isoform>
</comment>
<comment type="similarity">
    <text evidence="1">Belongs to the influenza C viruses NS1 family.</text>
</comment>
<sequence>MSDKTVKSTNLMAFIATKMLERQEDLDTCTEMQVEKMKTSTKARLRTESSFAPRTWEDAIKDGELLFNGTILQAESPTMTPASVEMKGKKLPIDFAPSNIAPIGQNPIYLSPCIPNFDGNVWEATMYHHRGATLTKTMNCNCFQRTIWCHPNPSRMRLSYAFVLYCRNTKKICGYLIARQVAGIETGIRKCFRCIKSGFVMATDEISLTILQSIKSGAQLDPYWGNETPDIDKTEAYMLSLREAGP</sequence>
<gene>
    <name evidence="1" type="primary">NS</name>
</gene>
<evidence type="ECO:0000255" key="1">
    <source>
        <dbReference type="HAMAP-Rule" id="MF_04066"/>
    </source>
</evidence>
<organismHost>
    <name type="scientific">Homo sapiens</name>
    <name type="common">Human</name>
    <dbReference type="NCBI Taxonomy" id="9606"/>
</organismHost>
<organismHost>
    <name type="scientific">Sus scrofa</name>
    <name type="common">Pig</name>
    <dbReference type="NCBI Taxonomy" id="9823"/>
</organismHost>
<reference key="1">
    <citation type="journal article" date="2000" name="J. Gen. Virol.">
        <title>Phylogenetic analysis of influenza C virus nonstructural (NS) protein genes and identification of the NS2 protein.</title>
        <authorList>
            <person name="Alamgir A.S.M."/>
            <person name="Matsuzaki Y."/>
            <person name="Hongo S."/>
            <person name="Tsuchiya E."/>
            <person name="Sugawara K."/>
            <person name="Muraki Y."/>
            <person name="Nakamura K."/>
        </authorList>
    </citation>
    <scope>NUCLEOTIDE SEQUENCE [GENOMIC RNA]</scope>
</reference>
<dbReference type="EMBL" id="AB034167">
    <property type="protein sequence ID" value="BAB12073.1"/>
    <property type="molecule type" value="Genomic_RNA"/>
</dbReference>
<dbReference type="GO" id="GO:0030430">
    <property type="term" value="C:host cell cytoplasm"/>
    <property type="evidence" value="ECO:0007669"/>
    <property type="project" value="UniProtKB-SubCell"/>
</dbReference>
<dbReference type="GO" id="GO:0042025">
    <property type="term" value="C:host cell nucleus"/>
    <property type="evidence" value="ECO:0007669"/>
    <property type="project" value="UniProtKB-SubCell"/>
</dbReference>
<dbReference type="GO" id="GO:0003723">
    <property type="term" value="F:RNA binding"/>
    <property type="evidence" value="ECO:0007669"/>
    <property type="project" value="UniProtKB-KW"/>
</dbReference>
<dbReference type="GO" id="GO:0039540">
    <property type="term" value="P:symbiont-mediated suppression of host cytoplasmic pattern recognition receptor signaling pathway via inhibition of RIG-I activity"/>
    <property type="evidence" value="ECO:0007669"/>
    <property type="project" value="UniProtKB-KW"/>
</dbReference>
<dbReference type="GO" id="GO:0039502">
    <property type="term" value="P:symbiont-mediated suppression of host type I interferon-mediated signaling pathway"/>
    <property type="evidence" value="ECO:0007669"/>
    <property type="project" value="UniProtKB-KW"/>
</dbReference>
<dbReference type="HAMAP" id="MF_04066">
    <property type="entry name" value="INFV_NS1"/>
    <property type="match status" value="1"/>
</dbReference>
<dbReference type="InterPro" id="IPR005187">
    <property type="entry name" value="Flu_C_NS1"/>
</dbReference>
<dbReference type="InterPro" id="IPR005188">
    <property type="entry name" value="Flu_C_NS2"/>
</dbReference>
<dbReference type="InterPro" id="IPR004208">
    <property type="entry name" value="NS1"/>
</dbReference>
<dbReference type="Pfam" id="PF03506">
    <property type="entry name" value="Flu_C_NS1"/>
    <property type="match status" value="1"/>
</dbReference>
<dbReference type="Pfam" id="PF03555">
    <property type="entry name" value="Flu_C_NS2"/>
    <property type="match status" value="1"/>
</dbReference>
<name>NS1_INCHY</name>
<feature type="chain" id="PRO_0000269461" description="Non-structural protein 1">
    <location>
        <begin position="1"/>
        <end position="246"/>
    </location>
</feature>
<organism>
    <name type="scientific">Influenza C virus (strain C/Hyogo/1/1983)</name>
    <dbReference type="NCBI Taxonomy" id="203225"/>
    <lineage>
        <taxon>Viruses</taxon>
        <taxon>Riboviria</taxon>
        <taxon>Orthornavirae</taxon>
        <taxon>Negarnaviricota</taxon>
        <taxon>Polyploviricotina</taxon>
        <taxon>Insthoviricetes</taxon>
        <taxon>Articulavirales</taxon>
        <taxon>Orthomyxoviridae</taxon>
        <taxon>Gammainfluenzavirus</taxon>
        <taxon>Gammainfluenzavirus influenzae</taxon>
        <taxon>Influenza C virus</taxon>
    </lineage>
</organism>
<accession>Q9ENX6</accession>
<keyword id="KW-0025">Alternative splicing</keyword>
<keyword id="KW-1035">Host cytoplasm</keyword>
<keyword id="KW-1048">Host nucleus</keyword>
<keyword id="KW-0945">Host-virus interaction</keyword>
<keyword id="KW-1090">Inhibition of host innate immune response by virus</keyword>
<keyword id="KW-1114">Inhibition of host interferon signaling pathway by virus</keyword>
<keyword id="KW-1088">Inhibition of host RIG-I by virus</keyword>
<keyword id="KW-1113">Inhibition of host RLR pathway by virus</keyword>
<keyword id="KW-0922">Interferon antiviral system evasion</keyword>
<keyword id="KW-0694">RNA-binding</keyword>
<keyword id="KW-0899">Viral immunoevasion</keyword>
<protein>
    <recommendedName>
        <fullName evidence="1">Non-structural protein 1</fullName>
        <shortName evidence="1">NS1</shortName>
    </recommendedName>
    <alternativeName>
        <fullName evidence="1">NS1A</fullName>
    </alternativeName>
</protein>
<proteinExistence type="inferred from homology"/>